<comment type="function">
    <text evidence="4 5">Acts as a transcriptional regulator in bone development. Represses the ALPL promoter activity and antagonizes the stimulatory effect of DLX5 on ALPL expression during osteoblast differentiation. Probable morphogenetic role. May play a role in limb-pattern formation. In osteoblasts, suppresses transcription driven by the osteocalcin FGF response element (OCFRE). Binds to the homeodomain-response element of the ALPL promoter.</text>
</comment>
<comment type="subunit">
    <text evidence="1">Interacts with MINT. Interacts with XRCC6 (Ku70) and XRCC5 (Ku80) (By similarity).</text>
</comment>
<comment type="interaction">
    <interactant intactId="EBI-1801354">
        <id>Q03358</id>
    </interactant>
    <interactant intactId="EBI-1801274">
        <id>Q9QYH6</id>
        <label>Maged1</label>
    </interactant>
    <organismsDiffer>false</organismsDiffer>
    <experiments>5</experiments>
</comment>
<comment type="interaction">
    <interactant intactId="EBI-1801354">
        <id>Q03358</id>
    </interactant>
    <interactant intactId="EBI-1801080">
        <id>P25233</id>
        <label>Ndn</label>
    </interactant>
    <organismsDiffer>false</organismsDiffer>
    <experiments>3</experiments>
</comment>
<comment type="subcellular location">
    <subcellularLocation>
        <location>Nucleus</location>
    </subcellularLocation>
</comment>
<comment type="tissue specificity">
    <text>Expressed in mesenchymal tissue in the developing spinal cord and limbs.</text>
</comment>
<comment type="induction">
    <text evidence="4">Up-regulated by BMP2.</text>
</comment>
<comment type="similarity">
    <text evidence="6">Belongs to the Msh homeobox family.</text>
</comment>
<dbReference type="EMBL" id="L11739">
    <property type="protein sequence ID" value="AAA03477.1"/>
    <property type="molecule type" value="Unassigned_DNA"/>
</dbReference>
<dbReference type="EMBL" id="L11738">
    <property type="protein sequence ID" value="AAA03477.1"/>
    <property type="status" value="JOINED"/>
    <property type="molecule type" value="Unassigned_DNA"/>
</dbReference>
<dbReference type="EMBL" id="S60460">
    <property type="protein sequence ID" value="AAC60657.2"/>
    <property type="molecule type" value="Genomic_DNA"/>
</dbReference>
<dbReference type="EMBL" id="S60698">
    <property type="protein sequence ID" value="AAC60657.2"/>
    <property type="status" value="JOINED"/>
    <property type="molecule type" value="Genomic_DNA"/>
</dbReference>
<dbReference type="EMBL" id="X59252">
    <property type="protein sequence ID" value="CAA41945.1"/>
    <property type="molecule type" value="mRNA"/>
</dbReference>
<dbReference type="EMBL" id="M38576">
    <property type="protein sequence ID" value="AAA37824.1"/>
    <property type="molecule type" value="Genomic_DNA"/>
</dbReference>
<dbReference type="CCDS" id="CCDS26522.1"/>
<dbReference type="PIR" id="A46122">
    <property type="entry name" value="A46122"/>
</dbReference>
<dbReference type="PIR" id="PS0410">
    <property type="entry name" value="PS0410"/>
</dbReference>
<dbReference type="PIR" id="S18814">
    <property type="entry name" value="S18814"/>
</dbReference>
<dbReference type="RefSeq" id="NP_038629.2">
    <property type="nucleotide sequence ID" value="NM_013601.2"/>
</dbReference>
<dbReference type="SMR" id="Q03358"/>
<dbReference type="BioGRID" id="201537">
    <property type="interactions" value="8"/>
</dbReference>
<dbReference type="CORUM" id="Q03358"/>
<dbReference type="FunCoup" id="Q03358">
    <property type="interactions" value="1200"/>
</dbReference>
<dbReference type="IntAct" id="Q03358">
    <property type="interactions" value="3"/>
</dbReference>
<dbReference type="STRING" id="10090.ENSMUSP00000021922"/>
<dbReference type="iPTMnet" id="Q03358"/>
<dbReference type="PhosphoSitePlus" id="Q03358"/>
<dbReference type="PaxDb" id="10090-ENSMUSP00000021922"/>
<dbReference type="ProteomicsDB" id="287511"/>
<dbReference type="Antibodypedia" id="905">
    <property type="antibodies" value="392 antibodies from 32 providers"/>
</dbReference>
<dbReference type="DNASU" id="17702"/>
<dbReference type="Ensembl" id="ENSMUST00000021922.10">
    <property type="protein sequence ID" value="ENSMUSP00000021922.8"/>
    <property type="gene ID" value="ENSMUSG00000021469.10"/>
</dbReference>
<dbReference type="GeneID" id="17702"/>
<dbReference type="KEGG" id="mmu:17702"/>
<dbReference type="UCSC" id="uc007qnw.1">
    <property type="organism name" value="mouse"/>
</dbReference>
<dbReference type="AGR" id="MGI:97169"/>
<dbReference type="CTD" id="4488"/>
<dbReference type="MGI" id="MGI:97169">
    <property type="gene designation" value="Msx2"/>
</dbReference>
<dbReference type="VEuPathDB" id="HostDB:ENSMUSG00000021469"/>
<dbReference type="eggNOG" id="KOG0492">
    <property type="taxonomic scope" value="Eukaryota"/>
</dbReference>
<dbReference type="GeneTree" id="ENSGT00940000159824"/>
<dbReference type="HOGENOM" id="CLU_072675_0_0_1"/>
<dbReference type="InParanoid" id="Q03358"/>
<dbReference type="OMA" id="PVGYNMY"/>
<dbReference type="OrthoDB" id="6159439at2759"/>
<dbReference type="PhylomeDB" id="Q03358"/>
<dbReference type="TreeFam" id="TF350699"/>
<dbReference type="BioGRID-ORCS" id="17702">
    <property type="hits" value="1 hit in 77 CRISPR screens"/>
</dbReference>
<dbReference type="PRO" id="PR:Q03358"/>
<dbReference type="Proteomes" id="UP000000589">
    <property type="component" value="Chromosome 13"/>
</dbReference>
<dbReference type="RNAct" id="Q03358">
    <property type="molecule type" value="protein"/>
</dbReference>
<dbReference type="Bgee" id="ENSMUSG00000021469">
    <property type="expression patterns" value="Expressed in tooth bud and 241 other cell types or tissues"/>
</dbReference>
<dbReference type="ExpressionAtlas" id="Q03358">
    <property type="expression patterns" value="baseline and differential"/>
</dbReference>
<dbReference type="GO" id="GO:0005829">
    <property type="term" value="C:cytosol"/>
    <property type="evidence" value="ECO:0007669"/>
    <property type="project" value="Ensembl"/>
</dbReference>
<dbReference type="GO" id="GO:0016607">
    <property type="term" value="C:nuclear speck"/>
    <property type="evidence" value="ECO:0007669"/>
    <property type="project" value="Ensembl"/>
</dbReference>
<dbReference type="GO" id="GO:0005654">
    <property type="term" value="C:nucleoplasm"/>
    <property type="evidence" value="ECO:0000304"/>
    <property type="project" value="Reactome"/>
</dbReference>
<dbReference type="GO" id="GO:0005667">
    <property type="term" value="C:transcription regulator complex"/>
    <property type="evidence" value="ECO:0000353"/>
    <property type="project" value="MGI"/>
</dbReference>
<dbReference type="GO" id="GO:0003677">
    <property type="term" value="F:DNA binding"/>
    <property type="evidence" value="ECO:0000314"/>
    <property type="project" value="MGI"/>
</dbReference>
<dbReference type="GO" id="GO:0001227">
    <property type="term" value="F:DNA-binding transcription repressor activity, RNA polymerase II-specific"/>
    <property type="evidence" value="ECO:0000314"/>
    <property type="project" value="BHF-UCL"/>
</dbReference>
<dbReference type="GO" id="GO:0000978">
    <property type="term" value="F:RNA polymerase II cis-regulatory region sequence-specific DNA binding"/>
    <property type="evidence" value="ECO:0000314"/>
    <property type="project" value="BHF-UCL"/>
</dbReference>
<dbReference type="GO" id="GO:0000977">
    <property type="term" value="F:RNA polymerase II transcription regulatory region sequence-specific DNA binding"/>
    <property type="evidence" value="ECO:0000315"/>
    <property type="project" value="NTNU_SB"/>
</dbReference>
<dbReference type="GO" id="GO:0043565">
    <property type="term" value="F:sequence-specific DNA binding"/>
    <property type="evidence" value="ECO:0000266"/>
    <property type="project" value="MGI"/>
</dbReference>
<dbReference type="GO" id="GO:0000976">
    <property type="term" value="F:transcription cis-regulatory region binding"/>
    <property type="evidence" value="ECO:0000314"/>
    <property type="project" value="UniProtKB"/>
</dbReference>
<dbReference type="GO" id="GO:0090427">
    <property type="term" value="P:activation of meiosis"/>
    <property type="evidence" value="ECO:0000353"/>
    <property type="project" value="MGI"/>
</dbReference>
<dbReference type="GO" id="GO:0009952">
    <property type="term" value="P:anterior/posterior pattern specification"/>
    <property type="evidence" value="ECO:0000316"/>
    <property type="project" value="MGI"/>
</dbReference>
<dbReference type="GO" id="GO:0030509">
    <property type="term" value="P:BMP signaling pathway"/>
    <property type="evidence" value="ECO:0000314"/>
    <property type="project" value="MGI"/>
</dbReference>
<dbReference type="GO" id="GO:0060349">
    <property type="term" value="P:bone morphogenesis"/>
    <property type="evidence" value="ECO:0000316"/>
    <property type="project" value="MGI"/>
</dbReference>
<dbReference type="GO" id="GO:0060346">
    <property type="term" value="P:bone trabecula formation"/>
    <property type="evidence" value="ECO:0000315"/>
    <property type="project" value="MGI"/>
</dbReference>
<dbReference type="GO" id="GO:0060444">
    <property type="term" value="P:branching involved in mammary gland duct morphogenesis"/>
    <property type="evidence" value="ECO:0000315"/>
    <property type="project" value="MGI"/>
</dbReference>
<dbReference type="GO" id="GO:0051216">
    <property type="term" value="P:cartilage development"/>
    <property type="evidence" value="ECO:0000315"/>
    <property type="project" value="MGI"/>
</dbReference>
<dbReference type="GO" id="GO:0061311">
    <property type="term" value="P:cell surface receptor signaling pathway involved in heart development"/>
    <property type="evidence" value="ECO:0000316"/>
    <property type="project" value="MGI"/>
</dbReference>
<dbReference type="GO" id="GO:0071392">
    <property type="term" value="P:cellular response to estradiol stimulus"/>
    <property type="evidence" value="ECO:0000314"/>
    <property type="project" value="MGI"/>
</dbReference>
<dbReference type="GO" id="GO:0071363">
    <property type="term" value="P:cellular response to growth factor stimulus"/>
    <property type="evidence" value="ECO:0000314"/>
    <property type="project" value="MGI"/>
</dbReference>
<dbReference type="GO" id="GO:0002063">
    <property type="term" value="P:chondrocyte development"/>
    <property type="evidence" value="ECO:0000315"/>
    <property type="project" value="MGI"/>
</dbReference>
<dbReference type="GO" id="GO:0042733">
    <property type="term" value="P:embryonic digit morphogenesis"/>
    <property type="evidence" value="ECO:0000316"/>
    <property type="project" value="MGI"/>
</dbReference>
<dbReference type="GO" id="GO:0035115">
    <property type="term" value="P:embryonic forelimb morphogenesis"/>
    <property type="evidence" value="ECO:0000316"/>
    <property type="project" value="MGI"/>
</dbReference>
<dbReference type="GO" id="GO:0035116">
    <property type="term" value="P:embryonic hindlimb morphogenesis"/>
    <property type="evidence" value="ECO:0000316"/>
    <property type="project" value="MGI"/>
</dbReference>
<dbReference type="GO" id="GO:0030326">
    <property type="term" value="P:embryonic limb morphogenesis"/>
    <property type="evidence" value="ECO:0000316"/>
    <property type="project" value="MGI"/>
</dbReference>
<dbReference type="GO" id="GO:0035880">
    <property type="term" value="P:embryonic nail plate morphogenesis"/>
    <property type="evidence" value="ECO:0000316"/>
    <property type="project" value="MGI"/>
</dbReference>
<dbReference type="GO" id="GO:0070166">
    <property type="term" value="P:enamel mineralization"/>
    <property type="evidence" value="ECO:0000315"/>
    <property type="project" value="MGI"/>
</dbReference>
<dbReference type="GO" id="GO:0003416">
    <property type="term" value="P:endochondral bone growth"/>
    <property type="evidence" value="ECO:0000315"/>
    <property type="project" value="MGI"/>
</dbReference>
<dbReference type="GO" id="GO:0003198">
    <property type="term" value="P:epithelial to mesenchymal transition involved in endocardial cushion formation"/>
    <property type="evidence" value="ECO:0000316"/>
    <property type="project" value="MGI"/>
</dbReference>
<dbReference type="GO" id="GO:0060364">
    <property type="term" value="P:frontal suture morphogenesis"/>
    <property type="evidence" value="ECO:0000315"/>
    <property type="project" value="MGI"/>
</dbReference>
<dbReference type="GO" id="GO:0061180">
    <property type="term" value="P:mammary gland epithelium development"/>
    <property type="evidence" value="ECO:0000316"/>
    <property type="project" value="MGI"/>
</dbReference>
<dbReference type="GO" id="GO:0097152">
    <property type="term" value="P:mesenchymal cell apoptotic process"/>
    <property type="evidence" value="ECO:0000316"/>
    <property type="project" value="MGI"/>
</dbReference>
<dbReference type="GO" id="GO:0043066">
    <property type="term" value="P:negative regulation of apoptotic process"/>
    <property type="evidence" value="ECO:0000316"/>
    <property type="project" value="MGI"/>
</dbReference>
<dbReference type="GO" id="GO:0008285">
    <property type="term" value="P:negative regulation of cell population proliferation"/>
    <property type="evidence" value="ECO:0000316"/>
    <property type="project" value="MGI"/>
</dbReference>
<dbReference type="GO" id="GO:0045892">
    <property type="term" value="P:negative regulation of DNA-templated transcription"/>
    <property type="evidence" value="ECO:0000314"/>
    <property type="project" value="UniProtKB"/>
</dbReference>
<dbReference type="GO" id="GO:0045599">
    <property type="term" value="P:negative regulation of fat cell differentiation"/>
    <property type="evidence" value="ECO:0000314"/>
    <property type="project" value="MGI"/>
</dbReference>
<dbReference type="GO" id="GO:0045617">
    <property type="term" value="P:negative regulation of keratinocyte differentiation"/>
    <property type="evidence" value="ECO:0000315"/>
    <property type="project" value="MGI"/>
</dbReference>
<dbReference type="GO" id="GO:0000122">
    <property type="term" value="P:negative regulation of transcription by RNA polymerase II"/>
    <property type="evidence" value="ECO:0000314"/>
    <property type="project" value="BHF-UCL"/>
</dbReference>
<dbReference type="GO" id="GO:0042476">
    <property type="term" value="P:odontogenesis"/>
    <property type="evidence" value="ECO:0000315"/>
    <property type="project" value="MGI"/>
</dbReference>
<dbReference type="GO" id="GO:0001503">
    <property type="term" value="P:ossification"/>
    <property type="evidence" value="ECO:0000315"/>
    <property type="project" value="MGI"/>
</dbReference>
<dbReference type="GO" id="GO:0002076">
    <property type="term" value="P:osteoblast development"/>
    <property type="evidence" value="ECO:0000315"/>
    <property type="project" value="MGI"/>
</dbReference>
<dbReference type="GO" id="GO:0001649">
    <property type="term" value="P:osteoblast differentiation"/>
    <property type="evidence" value="ECO:0000314"/>
    <property type="project" value="UniProtKB"/>
</dbReference>
<dbReference type="GO" id="GO:0003151">
    <property type="term" value="P:outflow tract morphogenesis"/>
    <property type="evidence" value="ECO:0000316"/>
    <property type="project" value="MGI"/>
</dbReference>
<dbReference type="GO" id="GO:0003148">
    <property type="term" value="P:outflow tract septum morphogenesis"/>
    <property type="evidence" value="ECO:0000316"/>
    <property type="project" value="MGI"/>
</dbReference>
<dbReference type="GO" id="GO:0030513">
    <property type="term" value="P:positive regulation of BMP signaling pathway"/>
    <property type="evidence" value="ECO:0000316"/>
    <property type="project" value="MGI"/>
</dbReference>
<dbReference type="GO" id="GO:2001055">
    <property type="term" value="P:positive regulation of mesenchymal cell apoptotic process"/>
    <property type="evidence" value="ECO:0000316"/>
    <property type="project" value="MGI"/>
</dbReference>
<dbReference type="GO" id="GO:0045669">
    <property type="term" value="P:positive regulation of osteoblast differentiation"/>
    <property type="evidence" value="ECO:0000314"/>
    <property type="project" value="MGI"/>
</dbReference>
<dbReference type="GO" id="GO:0051795">
    <property type="term" value="P:positive regulation of timing of catagen"/>
    <property type="evidence" value="ECO:0000315"/>
    <property type="project" value="MGI"/>
</dbReference>
<dbReference type="GO" id="GO:0042981">
    <property type="term" value="P:regulation of apoptotic process"/>
    <property type="evidence" value="ECO:0000314"/>
    <property type="project" value="MGI"/>
</dbReference>
<dbReference type="GO" id="GO:0023019">
    <property type="term" value="P:signal transduction involved in regulation of gene expression"/>
    <property type="evidence" value="ECO:0000316"/>
    <property type="project" value="MGI"/>
</dbReference>
<dbReference type="GO" id="GO:0048863">
    <property type="term" value="P:stem cell differentiation"/>
    <property type="evidence" value="ECO:0000316"/>
    <property type="project" value="MGI"/>
</dbReference>
<dbReference type="GO" id="GO:0042060">
    <property type="term" value="P:wound healing"/>
    <property type="evidence" value="ECO:0000315"/>
    <property type="project" value="MGI"/>
</dbReference>
<dbReference type="GO" id="GO:0035313">
    <property type="term" value="P:wound healing, spreading of epidermal cells"/>
    <property type="evidence" value="ECO:0000315"/>
    <property type="project" value="MGI"/>
</dbReference>
<dbReference type="CDD" id="cd00086">
    <property type="entry name" value="homeodomain"/>
    <property type="match status" value="1"/>
</dbReference>
<dbReference type="FunFam" id="1.10.10.60:FF:000134">
    <property type="entry name" value="Homeobox protein MSX-1"/>
    <property type="match status" value="1"/>
</dbReference>
<dbReference type="Gene3D" id="1.10.10.60">
    <property type="entry name" value="Homeodomain-like"/>
    <property type="match status" value="1"/>
</dbReference>
<dbReference type="InterPro" id="IPR001356">
    <property type="entry name" value="HD"/>
</dbReference>
<dbReference type="InterPro" id="IPR020479">
    <property type="entry name" value="HD_metazoa"/>
</dbReference>
<dbReference type="InterPro" id="IPR017970">
    <property type="entry name" value="Homeobox_CS"/>
</dbReference>
<dbReference type="InterPro" id="IPR009057">
    <property type="entry name" value="Homeodomain-like_sf"/>
</dbReference>
<dbReference type="InterPro" id="IPR050674">
    <property type="entry name" value="Msh_Homeobox_Regulators"/>
</dbReference>
<dbReference type="PANTHER" id="PTHR24338">
    <property type="entry name" value="HOMEOBOX PROTEIN MSX"/>
    <property type="match status" value="1"/>
</dbReference>
<dbReference type="PANTHER" id="PTHR24338:SF10">
    <property type="entry name" value="HOMEOBOX PROTEIN MSX-2"/>
    <property type="match status" value="1"/>
</dbReference>
<dbReference type="Pfam" id="PF00046">
    <property type="entry name" value="Homeodomain"/>
    <property type="match status" value="1"/>
</dbReference>
<dbReference type="PRINTS" id="PR00024">
    <property type="entry name" value="HOMEOBOX"/>
</dbReference>
<dbReference type="SMART" id="SM00389">
    <property type="entry name" value="HOX"/>
    <property type="match status" value="1"/>
</dbReference>
<dbReference type="SUPFAM" id="SSF46689">
    <property type="entry name" value="Homeodomain-like"/>
    <property type="match status" value="1"/>
</dbReference>
<dbReference type="PROSITE" id="PS00027">
    <property type="entry name" value="HOMEOBOX_1"/>
    <property type="match status" value="1"/>
</dbReference>
<dbReference type="PROSITE" id="PS50071">
    <property type="entry name" value="HOMEOBOX_2"/>
    <property type="match status" value="1"/>
</dbReference>
<reference key="1">
    <citation type="journal article" date="1991" name="Development">
        <title>The Msh-like homeobox genes define domains in the developing vertebrate eye.</title>
        <authorList>
            <person name="Monaghan A.P."/>
            <person name="Davidson D.R."/>
            <person name="Sime C."/>
            <person name="Graham E."/>
            <person name="Baldock R."/>
            <person name="Bhattacharya S.S."/>
            <person name="Hill R.E."/>
        </authorList>
    </citation>
    <scope>NUCLEOTIDE SEQUENCE [MRNA]</scope>
    <source>
        <strain>C57BL/6J</strain>
    </source>
</reference>
<reference key="2">
    <citation type="journal article" date="1993" name="Genomics">
        <title>Genomic structure, chromosomal location, and evolution of the mouse Hox 8 gene.</title>
        <authorList>
            <person name="Bell J.R."/>
            <person name="Noveen A."/>
            <person name="Liu Y.H."/>
            <person name="Ma L."/>
            <person name="Dobias S."/>
            <person name="Kundu R."/>
            <person name="Luo W."/>
            <person name="Xia Y."/>
        </authorList>
    </citation>
    <scope>NUCLEOTIDE SEQUENCE [GENOMIC DNA]</scope>
</reference>
<reference key="3">
    <citation type="journal article" date="1991" name="Gene">
        <title>Cloning and evolutionary analysis of msh-like homeobox genes from mouse, zebrafish and ascidian.</title>
        <authorList>
            <person name="Holland P.W.H."/>
        </authorList>
    </citation>
    <scope>NUCLEOTIDE SEQUENCE [GENOMIC DNA] OF 142-202</scope>
</reference>
<reference key="4">
    <citation type="journal article" date="1991" name="Nature">
        <title>Position-dependent expression of two related homeobox genes in developing vertebrate limbs.</title>
        <authorList>
            <person name="Davidson D.R."/>
            <person name="Crawley A."/>
            <person name="Hill R.E."/>
            <person name="Tickle C."/>
        </authorList>
    </citation>
    <scope>FUNCTION</scope>
</reference>
<reference key="5">
    <citation type="journal article" date="1999" name="Biochemistry">
        <title>The RRM domain of MINT, a novel msx2 binding protein, recognizes and regulates the rat osteocalcin promoter.</title>
        <authorList>
            <person name="Newberry E.P."/>
            <person name="Latifi T."/>
            <person name="Towler D.A."/>
        </authorList>
    </citation>
    <scope>INTERACTION WITH MINT</scope>
</reference>
<reference key="6">
    <citation type="journal article" date="2004" name="J. Biol. Chem.">
        <title>Bone morphogenetic protein-2-induced alkaline phosphatase expression is stimulated by Dlx5 and repressed by Msx2.</title>
        <authorList>
            <person name="Kim Y.J."/>
            <person name="Lee M.H."/>
            <person name="Wozney J.M."/>
            <person name="Cho J.Y."/>
            <person name="Ryoo H.M."/>
        </authorList>
    </citation>
    <scope>FUNCTION</scope>
    <scope>INDUCTION</scope>
    <scope>DNA-BINDING</scope>
</reference>
<organism>
    <name type="scientific">Mus musculus</name>
    <name type="common">Mouse</name>
    <dbReference type="NCBI Taxonomy" id="10090"/>
    <lineage>
        <taxon>Eukaryota</taxon>
        <taxon>Metazoa</taxon>
        <taxon>Chordata</taxon>
        <taxon>Craniata</taxon>
        <taxon>Vertebrata</taxon>
        <taxon>Euteleostomi</taxon>
        <taxon>Mammalia</taxon>
        <taxon>Eutheria</taxon>
        <taxon>Euarchontoglires</taxon>
        <taxon>Glires</taxon>
        <taxon>Rodentia</taxon>
        <taxon>Myomorpha</taxon>
        <taxon>Muroidea</taxon>
        <taxon>Muridae</taxon>
        <taxon>Murinae</taxon>
        <taxon>Mus</taxon>
        <taxon>Mus</taxon>
    </lineage>
</organism>
<gene>
    <name type="primary">Msx2</name>
    <name type="synonym">Hox-8.1</name>
    <name type="synonym">Msx-2</name>
</gene>
<accession>Q03358</accession>
<accession>Q63856</accession>
<feature type="chain" id="PRO_0000049100" description="Homeobox protein MSX-2">
    <location>
        <begin position="1"/>
        <end position="267"/>
    </location>
</feature>
<feature type="DNA-binding region" description="Homeobox" evidence="2">
    <location>
        <begin position="142"/>
        <end position="201"/>
    </location>
</feature>
<feature type="region of interest" description="Disordered" evidence="3">
    <location>
        <begin position="1"/>
        <end position="42"/>
    </location>
</feature>
<feature type="region of interest" description="Disordered" evidence="3">
    <location>
        <begin position="104"/>
        <end position="132"/>
    </location>
</feature>
<feature type="sequence conflict" description="In Ref. 1; CAA41945." evidence="6" ref="1">
    <original>F</original>
    <variation>FF</variation>
    <location>
        <position position="11"/>
    </location>
</feature>
<feature type="sequence conflict" description="In Ref. 2; AAC60657." evidence="6" ref="2">
    <original>A</original>
    <variation>R</variation>
    <location>
        <position position="89"/>
    </location>
</feature>
<feature type="sequence conflict" description="In Ref. 1; CAA41945." evidence="6" ref="1">
    <original>M</original>
    <variation>I</variation>
    <location>
        <position position="263"/>
    </location>
</feature>
<feature type="sequence conflict" description="In Ref. 1; CAA41945." evidence="6" ref="1">
    <original>L</original>
    <variation>V</variation>
    <location>
        <position position="266"/>
    </location>
</feature>
<evidence type="ECO:0000250" key="1"/>
<evidence type="ECO:0000255" key="2">
    <source>
        <dbReference type="PROSITE-ProRule" id="PRU00108"/>
    </source>
</evidence>
<evidence type="ECO:0000256" key="3">
    <source>
        <dbReference type="SAM" id="MobiDB-lite"/>
    </source>
</evidence>
<evidence type="ECO:0000269" key="4">
    <source>
    </source>
</evidence>
<evidence type="ECO:0000269" key="5">
    <source>
    </source>
</evidence>
<evidence type="ECO:0000305" key="6"/>
<sequence length="267" mass="28915">MASPTKGGDLFSSDEEGPAVLAGPGPGPGGAEGSAEERRVKVSSLPFSVEALMSDKKPPKESPAVPPDCASAGAVLRPLLLPGHGVRDAHSPGPLVKPFETASVKSENSEDGAPWIQEPGRYSPPPRHMSPTTCTLRKHKTNRKPRTPFTTSQLLALERKFRQKQYLSIAERAEFSSSLNLTETQVKIWFQNRRAKAKRLQEAELEKLKMAAKPMLPSGFSLPFPINSPLQAASIYGASYPFHRPVLPIPPVGLYATPVGYGMYHLS</sequence>
<name>MSX2_MOUSE</name>
<keyword id="KW-0217">Developmental protein</keyword>
<keyword id="KW-0238">DNA-binding</keyword>
<keyword id="KW-0371">Homeobox</keyword>
<keyword id="KW-0539">Nucleus</keyword>
<keyword id="KW-0892">Osteogenesis</keyword>
<keyword id="KW-1185">Reference proteome</keyword>
<keyword id="KW-0678">Repressor</keyword>
<keyword id="KW-0804">Transcription</keyword>
<keyword id="KW-0805">Transcription regulation</keyword>
<protein>
    <recommendedName>
        <fullName>Homeobox protein MSX-2</fullName>
    </recommendedName>
    <alternativeName>
        <fullName>Homeobox protein Hox-8-1</fullName>
    </alternativeName>
</protein>
<proteinExistence type="evidence at protein level"/>